<keyword id="KW-0002">3D-structure</keyword>
<keyword id="KW-0007">Acetylation</keyword>
<keyword id="KW-0903">Direct protein sequencing</keyword>
<keyword id="KW-0238">DNA-binding</keyword>
<keyword id="KW-0325">Glycoprotein</keyword>
<keyword id="KW-1017">Isopeptide bond</keyword>
<keyword id="KW-0472">Membrane</keyword>
<keyword id="KW-0479">Metal-binding</keyword>
<keyword id="KW-0509">mRNA transport</keyword>
<keyword id="KW-0906">Nuclear pore complex</keyword>
<keyword id="KW-0539">Nucleus</keyword>
<keyword id="KW-0597">Phosphoprotein</keyword>
<keyword id="KW-0653">Protein transport</keyword>
<keyword id="KW-1185">Reference proteome</keyword>
<keyword id="KW-0677">Repeat</keyword>
<keyword id="KW-0811">Translocation</keyword>
<keyword id="KW-0813">Transport</keyword>
<keyword id="KW-0832">Ubl conjugation</keyword>
<keyword id="KW-0862">Zinc</keyword>
<keyword id="KW-0863">Zinc-finger</keyword>
<comment type="function">
    <text evidence="2">Component of the nuclear pore complex (NPC), a complex required for the trafficking across the nuclear envelope. Functions as a scaffolding element in the nuclear phase of the NPC essential for normal nucleocytoplasmic transport of proteins and mRNAs. Involved in the quality control and retention of unspliced mRNAs in the nucleus; in association with TPR, regulates the nuclear export of unspliced mRNA species bearing constitutive transport element (CTE) in a NXF1- and KHDRBS1-independent manner. Mediates TPR anchoring to the nuclear membrane at NPC (By similarity). The repeat-containing domain may be involved in anchoring other components of the NPC to the pore membrane. Possible DNA-binding subunit of the nuclear pore complex (NPC) (By similarity).</text>
</comment>
<comment type="cofactor">
    <cofactor>
        <name>Zn(2+)</name>
        <dbReference type="ChEBI" id="CHEBI:29105"/>
    </cofactor>
    <text>Binds at least 4 zinc ions per subunit.</text>
</comment>
<comment type="subunit">
    <text evidence="2 5 6">Part of the nuclear pore complex (NPC) (By similarity). Interacts with TPR (via coiled coil region); the interaction is direct and provides a link between the core structure and the TPR-containing nuclear basket of the nuclear pore complex (NPC) (By similarity). Interacts with HIKESHI (By similarity). Interacts with SENP2. Interacts with XPO5 (By similarity). Interacts with RAN; the interaction occurs in a GTP- and GDP-independent manner (PubMed:18611384, PubMed:19505478). Interacts with MCM3AP; this interaction is required for MCM3AP localization at the nuclear pore complex (By similarity). Interacts with MAPK1 (By similarity).</text>
</comment>
<comment type="interaction">
    <interactant intactId="EBI-6140533">
        <id>P49791</id>
    </interactant>
    <interactant intactId="EBI-286642">
        <id>P62826</id>
        <label>RAN</label>
    </interactant>
    <organismsDiffer>true</organismsDiffer>
    <experiments>5</experiments>
</comment>
<comment type="subcellular location">
    <subcellularLocation>
        <location>Nucleus</location>
    </subcellularLocation>
    <subcellularLocation>
        <location>Nucleus membrane</location>
    </subcellularLocation>
    <subcellularLocation>
        <location>Nucleus</location>
        <location>Nuclear pore complex</location>
    </subcellularLocation>
    <text evidence="1">Dissociates from the NPC structure early during prophase of mitosis. Integrated in the newly assembled nuclear envelope of postmitotic cells early in G1 (By similarity). Localized to the nucleoplasmic side of the nuclear pore complex (NPC) core structure, forming a fibrous structure called the nuclear basket. Tightly associated with the nuclear membrane and lamina. Colocalized with NUP98 and TPR to the nuclear basket at the nucleoplasmic side of the NPC. Detected in diffuse and discrete intranuclear foci.</text>
</comment>
<comment type="domain">
    <text evidence="7">Contains FG repeats. FG repeats are interaction sites for karyopherins (importins, exportins) and form probably an affinity gradient, guiding the transport proteins unidirectionally with their cargo through the NPC. FG repeat regions are highly flexible and lack ordered secondary structure. The overall conservation of FG repeats regarding exact sequence, spacing, and repeat unit length is limited.</text>
</comment>
<comment type="PTM">
    <text>Phosphorylated in interphase, hyperphosphorylated during mitosis. May play a role in the reversible disassembly of the nuclear pore complex during mitosis.</text>
</comment>
<comment type="PTM">
    <text evidence="1">O-glycosylated during cytokinesis at sites identical or close to phosphorylation sites, this interferes with the phosphorylation status.</text>
</comment>
<comment type="similarity">
    <text evidence="7">Belongs to the NUP153 family.</text>
</comment>
<proteinExistence type="evidence at protein level"/>
<reference key="1">
    <citation type="journal article" date="1993" name="Cell">
        <title>A nuclear pore complex protein that contains zinc finger motifs, binds DNA, and faces the nucleoplasm.</title>
        <authorList>
            <person name="Sukegawa J."/>
            <person name="Blobel G."/>
        </authorList>
    </citation>
    <scope>NUCLEOTIDE SEQUENCE [MRNA]</scope>
    <scope>PROTEIN SEQUENCE OF 602-613; 622-645 AND 971-993</scope>
    <source>
        <strain>Buffalo</strain>
        <tissue>Liver</tissue>
    </source>
</reference>
<reference key="2">
    <citation type="journal article" date="2002" name="J. Cell Biol.">
        <title>Tpr is localized within the nuclear basket of the pore complex and has a role in nuclear protein export.</title>
        <authorList>
            <person name="Frosst P."/>
            <person name="Guan T."/>
            <person name="Subauste C."/>
            <person name="Hahn K."/>
            <person name="Gerace L."/>
        </authorList>
    </citation>
    <scope>SUBCELLULAR LOCATION</scope>
</reference>
<reference key="3">
    <citation type="journal article" date="2005" name="Mol. Biol. Cell">
        <title>Vertebrate Nup53 interacts with the nuclear lamina and is required for the assembly of a Nup93-containing complex.</title>
        <authorList>
            <person name="Hawryluk-Gara L.A."/>
            <person name="Shibuya E.K."/>
            <person name="Wozniak R.W."/>
        </authorList>
    </citation>
    <scope>SUBCELLULAR LOCATION</scope>
</reference>
<reference key="4">
    <citation type="journal article" date="2012" name="Nat. Commun.">
        <title>Quantitative maps of protein phosphorylation sites across 14 different rat organs and tissues.</title>
        <authorList>
            <person name="Lundby A."/>
            <person name="Secher A."/>
            <person name="Lage K."/>
            <person name="Nordsborg N.B."/>
            <person name="Dmytriyev A."/>
            <person name="Lundby C."/>
            <person name="Olsen J.V."/>
        </authorList>
    </citation>
    <scope>PHOSPHORYLATION [LARGE SCALE ANALYSIS] AT THR-97; SER-331 AND SER-339</scope>
    <scope>IDENTIFICATION BY MASS SPECTROMETRY [LARGE SCALE ANALYSIS]</scope>
</reference>
<reference key="5">
    <citation type="journal article" date="2008" name="Structure">
        <title>The crystal structure of the Ran-Nup153ZnF2 complex: a general Ran docking site at the nuclear pore complex.</title>
        <authorList>
            <person name="Schrader N."/>
            <person name="Koerner C."/>
            <person name="Koessmeier K."/>
            <person name="Bangert J.A."/>
            <person name="Wittinghofer A."/>
            <person name="Stoll R."/>
            <person name="Vetter I.R."/>
        </authorList>
    </citation>
    <scope>STRUCTURE BY NMR OF 703-755 IN COMPLEX WITH RAN AND ZINC</scope>
    <scope>INTERACTION WITH RAN</scope>
    <scope>MUTAGENESIS OF PHE-714 AND PHE-718</scope>
</reference>
<reference key="6">
    <citation type="journal article" date="2009" name="J. Mol. Biol.">
        <title>Crystallographic and biochemical analysis of the Ran-binding zinc finger domain.</title>
        <authorList>
            <person name="Partridge J.R."/>
            <person name="Schwartz T.U."/>
        </authorList>
    </citation>
    <scope>X-RAY CRYSTALLOGRAPHY (1.79 ANGSTROMS) OF 658-817 IN COMPLEX WITH RAN AND ZINC</scope>
</reference>
<sequence length="1468" mass="152824">MASGAGGIGGGGGGGKIRTRRCHQGPVKPYQQGRPQHQGILSRVTESVKNIVPGWLQRYFNKSENACSCSVNADEVPRWPENREDEREIYVDENTNTDDGRTTPEPTGSNTEEPSTTSTASNYPDVLTRPSLHRSHLNFSVLESPALHCQPSTSSAFPIGSSGFSLVKEIKDSTSQHDDDNISTTSGFSSRASEKDIAVSKNTSLPPLWSPEAERSHSLSQHTAISSKKPAFNLSAFGTLSTSLGNSSILKTSQLGDSPFYPGKTTYGGAAAAVRQNKVRSTPYQAPVRRQMKAKQLNAQSYGVTSSTARRILQSLEKMSSPLADAKRIPSAVSSPLNSPLDRSGIDSTVFQAKKEKVDSQYPPVQRLMTPKPVSIATNRTVYFKPSLTPSGDLRKTNQRIDKKNSTVDEKNISRQNREQESGFSYPNFSIPAANGLSSGVGGGGGKMRRERTTHFVASKPSEEEEVEVPLLPQISLPISSSSLPTFNFSSPAISAASSSSVSPSQPLSNKVQMTSLGSTGNPVFTFSSPIVKSTQADVLPPASIGFTFSVPLAKTELSGPNSSSETVLSSSVTAQDNTVVNSSSSKKRSAPCEDPFTPAKILREGSVLDILKTPGFMSPKVDSPALQPTTTSSIVYTRPAISTFSSSGVEFGESLKAGSSWQCDTCLLQNKVTDNKCIACQAAKLPLKETAKQTGIGTPSKSDKPASTSGTGFGDKFKPAIGTWDCDTCLVQNKPEAVKCVACETPKPGTGVKRALPLTVASESPVTASSSTTVTTGTLGFGDKFKRPVGSWECPVCCVSNKAEDSRCVSCTSEKPGLVSASSSNSVPVSLPSGGCLGLDKFKKPEGSWDCEVCLVQNKADSTKCIACESAKPGTKSEFKGFGTSSSLNPAPSAFKFGIPSSSSGLSQTFTSTGNFKFGDQGGFKLGTSSDSGSTNTMNTNFKFPKPTGDFKFGVLPDSKPEEIKNDSKNDNFQFGPSSGLSNPASSAPFQFGVSTLGQQEKKEELPQSSSAGFSFGAGVANPSSAAIDTTVTSENKSGFNFGTIDTKSVSVTPFTYKTTEAKKEDASATKGGFTFGKVDSAALSSPSMFVLGRTEEKQQEPVTSTSLVFGKKADNEEPKCQPVFSFGNSEQTKDESSSKPTFSFSVAKPSVKESDQLAKATFAFGNQTNTTTDQGAAKPAFSFLNSSSSSSSTPATSSSASIFGSSTSSSSPPVAAFVFGQASNPVSSSAFGNSAESSTSQPLLFPQDGKPATTSSTASAAPPFVFGTGASSNSTVSSGFTFGATTTSSSSGSFFVFGTGHSAPSASPAFGANQTPTFGQSQGASQPNPPSFGSISSSTALFSAGSQPVPPPTFGTVSSSSQPPVFGQQPSQSAFGSGTANASSVFQFGSSTTNFNFTNNNPSGVFTFGASPSTPAAAAQPSGSGGFSFSQSPASFTVGSNGKNMFSSSGTSVSGRKIKTAVRRKK</sequence>
<gene>
    <name type="primary">Nup153</name>
</gene>
<feature type="initiator methionine" description="Removed" evidence="2">
    <location>
        <position position="1"/>
    </location>
</feature>
<feature type="chain" id="PRO_0000204843" description="Nuclear pore complex protein Nup153">
    <location>
        <begin position="2"/>
        <end position="1468"/>
    </location>
</feature>
<feature type="repeat" description="1" evidence="7">
    <location>
        <begin position="237"/>
        <end position="238"/>
    </location>
</feature>
<feature type="repeat" description="2" evidence="7">
    <location>
        <begin position="652"/>
        <end position="653"/>
    </location>
</feature>
<feature type="repeat" description="3" evidence="7">
    <location>
        <begin position="714"/>
        <end position="715"/>
    </location>
</feature>
<feature type="repeat" description="4" evidence="7">
    <location>
        <begin position="782"/>
        <end position="783"/>
    </location>
</feature>
<feature type="repeat" description="5" evidence="7">
    <location>
        <begin position="898"/>
        <end position="899"/>
    </location>
</feature>
<feature type="repeat" description="6" evidence="7">
    <location>
        <begin position="919"/>
        <end position="920"/>
    </location>
</feature>
<feature type="repeat" description="7" evidence="7">
    <location>
        <begin position="954"/>
        <end position="955"/>
    </location>
</feature>
<feature type="repeat" description="8" evidence="7">
    <location>
        <begin position="976"/>
        <end position="977"/>
    </location>
</feature>
<feature type="repeat" description="9" evidence="7">
    <location>
        <begin position="993"/>
        <end position="994"/>
    </location>
</feature>
<feature type="repeat" description="10" evidence="7">
    <location>
        <begin position="1017"/>
        <end position="1018"/>
    </location>
</feature>
<feature type="repeat" description="11" evidence="7">
    <location>
        <begin position="1077"/>
        <end position="1078"/>
    </location>
</feature>
<feature type="repeat" description="12" evidence="7">
    <location>
        <begin position="1111"/>
        <end position="1112"/>
    </location>
</feature>
<feature type="repeat" description="13" evidence="7">
    <location>
        <begin position="1128"/>
        <end position="1129"/>
    </location>
</feature>
<feature type="repeat" description="14" evidence="7">
    <location>
        <begin position="1166"/>
        <end position="1167"/>
    </location>
</feature>
<feature type="repeat" description="15" evidence="7">
    <location>
        <begin position="1205"/>
        <end position="1206"/>
    </location>
</feature>
<feature type="repeat" description="16" evidence="7">
    <location>
        <begin position="1221"/>
        <end position="1222"/>
    </location>
</feature>
<feature type="repeat" description="17" evidence="7">
    <location>
        <begin position="1233"/>
        <end position="1234"/>
    </location>
</feature>
<feature type="repeat" description="18" evidence="7">
    <location>
        <begin position="1268"/>
        <end position="1269"/>
    </location>
</feature>
<feature type="repeat" description="19" evidence="7">
    <location>
        <begin position="1282"/>
        <end position="1283"/>
    </location>
</feature>
<feature type="repeat" description="20" evidence="7">
    <location>
        <begin position="1284"/>
        <end position="1285"/>
    </location>
</feature>
<feature type="repeat" description="21" evidence="7">
    <location>
        <begin position="1299"/>
        <end position="1300"/>
    </location>
</feature>
<feature type="repeat" description="22" evidence="7">
    <location>
        <begin position="1312"/>
        <end position="1313"/>
    </location>
</feature>
<feature type="repeat" description="23" evidence="7">
    <location>
        <begin position="1320"/>
        <end position="1321"/>
    </location>
</feature>
<feature type="repeat" description="24" evidence="7">
    <location>
        <begin position="1334"/>
        <end position="1335"/>
    </location>
</feature>
<feature type="repeat" description="25" evidence="7">
    <location>
        <begin position="1356"/>
        <end position="1357"/>
    </location>
</feature>
<feature type="repeat" description="26" evidence="7">
    <location>
        <begin position="1368"/>
        <end position="1369"/>
    </location>
</feature>
<feature type="repeat" description="27" evidence="7">
    <location>
        <begin position="1377"/>
        <end position="1378"/>
    </location>
</feature>
<feature type="repeat" description="28" evidence="7">
    <location>
        <begin position="1390"/>
        <end position="1391"/>
    </location>
</feature>
<feature type="repeat" description="29" evidence="7">
    <location>
        <begin position="1410"/>
        <end position="1411"/>
    </location>
</feature>
<feature type="zinc finger region" description="RanBP2-type 1" evidence="3">
    <location>
        <begin position="657"/>
        <end position="687"/>
    </location>
</feature>
<feature type="zinc finger region" description="RanBP2-type 2" evidence="3">
    <location>
        <begin position="721"/>
        <end position="750"/>
    </location>
</feature>
<feature type="zinc finger region" description="RanBP2-type 3" evidence="3">
    <location>
        <begin position="789"/>
        <end position="818"/>
    </location>
</feature>
<feature type="zinc finger region" description="RanBP2-type 4" evidence="3">
    <location>
        <begin position="846"/>
        <end position="875"/>
    </location>
</feature>
<feature type="region of interest" description="Disordered" evidence="4">
    <location>
        <begin position="1"/>
        <end position="39"/>
    </location>
</feature>
<feature type="region of interest" description="Disordered" evidence="4">
    <location>
        <begin position="78"/>
        <end position="128"/>
    </location>
</feature>
<feature type="region of interest" description="Disordered" evidence="4">
    <location>
        <begin position="172"/>
        <end position="222"/>
    </location>
</feature>
<feature type="region of interest" description="29 X 2 AA repeats of F-G" evidence="7">
    <location>
        <begin position="237"/>
        <end position="1411"/>
    </location>
</feature>
<feature type="region of interest" description="Disordered" evidence="4">
    <location>
        <begin position="387"/>
        <end position="429"/>
    </location>
</feature>
<feature type="region of interest" description="Disordered" evidence="4">
    <location>
        <begin position="693"/>
        <end position="714"/>
    </location>
</feature>
<feature type="region of interest" description="Disordered" evidence="4">
    <location>
        <begin position="960"/>
        <end position="985"/>
    </location>
</feature>
<feature type="region of interest" description="Disordered" evidence="4">
    <location>
        <begin position="1121"/>
        <end position="1145"/>
    </location>
</feature>
<feature type="region of interest" description="Disordered" evidence="4">
    <location>
        <begin position="1190"/>
        <end position="1209"/>
    </location>
</feature>
<feature type="region of interest" description="Disordered" evidence="4">
    <location>
        <begin position="1231"/>
        <end position="1260"/>
    </location>
</feature>
<feature type="region of interest" description="Disordered" evidence="4">
    <location>
        <begin position="1308"/>
        <end position="1380"/>
    </location>
</feature>
<feature type="region of interest" description="Disordered" evidence="4">
    <location>
        <begin position="1414"/>
        <end position="1468"/>
    </location>
</feature>
<feature type="compositionally biased region" description="Gly residues" evidence="4">
    <location>
        <begin position="1"/>
        <end position="16"/>
    </location>
</feature>
<feature type="compositionally biased region" description="Basic and acidic residues" evidence="4">
    <location>
        <begin position="78"/>
        <end position="90"/>
    </location>
</feature>
<feature type="compositionally biased region" description="Polar residues" evidence="4">
    <location>
        <begin position="104"/>
        <end position="122"/>
    </location>
</feature>
<feature type="compositionally biased region" description="Polar residues" evidence="4">
    <location>
        <begin position="182"/>
        <end position="191"/>
    </location>
</feature>
<feature type="compositionally biased region" description="Basic and acidic residues" evidence="4">
    <location>
        <begin position="393"/>
        <end position="421"/>
    </location>
</feature>
<feature type="compositionally biased region" description="Polar residues" evidence="4">
    <location>
        <begin position="693"/>
        <end position="711"/>
    </location>
</feature>
<feature type="compositionally biased region" description="Basic and acidic residues" evidence="4">
    <location>
        <begin position="960"/>
        <end position="971"/>
    </location>
</feature>
<feature type="compositionally biased region" description="Polar residues" evidence="4">
    <location>
        <begin position="972"/>
        <end position="985"/>
    </location>
</feature>
<feature type="compositionally biased region" description="Low complexity" evidence="4">
    <location>
        <begin position="1231"/>
        <end position="1242"/>
    </location>
</feature>
<feature type="compositionally biased region" description="Polar residues" evidence="4">
    <location>
        <begin position="1314"/>
        <end position="1348"/>
    </location>
</feature>
<feature type="compositionally biased region" description="Polar residues" evidence="4">
    <location>
        <begin position="1357"/>
        <end position="1380"/>
    </location>
</feature>
<feature type="compositionally biased region" description="Low complexity" evidence="4">
    <location>
        <begin position="1414"/>
        <end position="1438"/>
    </location>
</feature>
<feature type="compositionally biased region" description="Polar residues" evidence="4">
    <location>
        <begin position="1439"/>
        <end position="1456"/>
    </location>
</feature>
<feature type="compositionally biased region" description="Basic residues" evidence="4">
    <location>
        <begin position="1458"/>
        <end position="1468"/>
    </location>
</feature>
<feature type="binding site" evidence="5 6">
    <location>
        <position position="664"/>
    </location>
    <ligand>
        <name>Zn(2+)</name>
        <dbReference type="ChEBI" id="CHEBI:29105"/>
        <label>1</label>
    </ligand>
</feature>
<feature type="binding site" evidence="5 6">
    <location>
        <position position="667"/>
    </location>
    <ligand>
        <name>Zn(2+)</name>
        <dbReference type="ChEBI" id="CHEBI:29105"/>
        <label>1</label>
    </ligand>
</feature>
<feature type="binding site" evidence="5 6">
    <location>
        <position position="678"/>
    </location>
    <ligand>
        <name>Zn(2+)</name>
        <dbReference type="ChEBI" id="CHEBI:29105"/>
        <label>1</label>
    </ligand>
</feature>
<feature type="binding site" evidence="5 6">
    <location>
        <position position="681"/>
    </location>
    <ligand>
        <name>Zn(2+)</name>
        <dbReference type="ChEBI" id="CHEBI:29105"/>
        <label>1</label>
    </ligand>
</feature>
<feature type="binding site" evidence="5 6">
    <location>
        <position position="727"/>
    </location>
    <ligand>
        <name>Zn(2+)</name>
        <dbReference type="ChEBI" id="CHEBI:29105"/>
        <label>2</label>
    </ligand>
</feature>
<feature type="binding site" evidence="5 6">
    <location>
        <position position="730"/>
    </location>
    <ligand>
        <name>Zn(2+)</name>
        <dbReference type="ChEBI" id="CHEBI:29105"/>
        <label>2</label>
    </ligand>
</feature>
<feature type="binding site" evidence="5 6">
    <location>
        <position position="741"/>
    </location>
    <ligand>
        <name>Zn(2+)</name>
        <dbReference type="ChEBI" id="CHEBI:29105"/>
        <label>2</label>
    </ligand>
</feature>
<feature type="binding site" evidence="5 6">
    <location>
        <position position="744"/>
    </location>
    <ligand>
        <name>Zn(2+)</name>
        <dbReference type="ChEBI" id="CHEBI:29105"/>
        <label>2</label>
    </ligand>
</feature>
<feature type="binding site" evidence="5 6">
    <location>
        <position position="795"/>
    </location>
    <ligand>
        <name>Zn(2+)</name>
        <dbReference type="ChEBI" id="CHEBI:29105"/>
        <label>3</label>
    </ligand>
</feature>
<feature type="binding site" evidence="5 6">
    <location>
        <position position="798"/>
    </location>
    <ligand>
        <name>Zn(2+)</name>
        <dbReference type="ChEBI" id="CHEBI:29105"/>
        <label>3</label>
    </ligand>
</feature>
<feature type="binding site" evidence="5 6">
    <location>
        <position position="809"/>
    </location>
    <ligand>
        <name>Zn(2+)</name>
        <dbReference type="ChEBI" id="CHEBI:29105"/>
        <label>3</label>
    </ligand>
</feature>
<feature type="binding site" evidence="5 6">
    <location>
        <position position="812"/>
    </location>
    <ligand>
        <name>Zn(2+)</name>
        <dbReference type="ChEBI" id="CHEBI:29105"/>
        <label>3</label>
    </ligand>
</feature>
<feature type="binding site" evidence="5 6">
    <location>
        <position position="852"/>
    </location>
    <ligand>
        <name>Zn(2+)</name>
        <dbReference type="ChEBI" id="CHEBI:29105"/>
        <label>4</label>
    </ligand>
</feature>
<feature type="binding site" evidence="5 6">
    <location>
        <position position="855"/>
    </location>
    <ligand>
        <name>Zn(2+)</name>
        <dbReference type="ChEBI" id="CHEBI:29105"/>
        <label>4</label>
    </ligand>
</feature>
<feature type="binding site" evidence="5 6">
    <location>
        <position position="866"/>
    </location>
    <ligand>
        <name>Zn(2+)</name>
        <dbReference type="ChEBI" id="CHEBI:29105"/>
        <label>4</label>
    </ligand>
</feature>
<feature type="binding site" evidence="5 6">
    <location>
        <position position="869"/>
    </location>
    <ligand>
        <name>Zn(2+)</name>
        <dbReference type="ChEBI" id="CHEBI:29105"/>
        <label>4</label>
    </ligand>
</feature>
<feature type="modified residue" description="N-acetylalanine" evidence="2">
    <location>
        <position position="2"/>
    </location>
</feature>
<feature type="modified residue" description="Phosphothreonine" evidence="8">
    <location>
        <position position="97"/>
    </location>
</feature>
<feature type="modified residue" description="Phosphothreonine" evidence="2">
    <location>
        <position position="103"/>
    </location>
</feature>
<feature type="modified residue" description="Phosphoserine" evidence="2">
    <location>
        <position position="183"/>
    </location>
</feature>
<feature type="modified residue" description="Phosphoserine" evidence="2">
    <location>
        <position position="186"/>
    </location>
</feature>
<feature type="modified residue" description="Phosphoserine" evidence="2">
    <location>
        <position position="193"/>
    </location>
</feature>
<feature type="modified residue" description="Phosphoserine" evidence="2">
    <location>
        <position position="204"/>
    </location>
</feature>
<feature type="modified residue" description="Phosphoserine" evidence="2">
    <location>
        <position position="210"/>
    </location>
</feature>
<feature type="modified residue" description="Phosphoserine" evidence="2">
    <location>
        <position position="241"/>
    </location>
</feature>
<feature type="modified residue" description="Phosphoserine" evidence="2">
    <location>
        <position position="258"/>
    </location>
</feature>
<feature type="modified residue" description="Phosphoserine" evidence="2">
    <location>
        <position position="321"/>
    </location>
</feature>
<feature type="modified residue" description="Phosphoserine" evidence="8">
    <location>
        <position position="331"/>
    </location>
</feature>
<feature type="modified residue" description="Phosphoserine" evidence="2">
    <location>
        <position position="334"/>
    </location>
</feature>
<feature type="modified residue" description="Phosphoserine" evidence="2">
    <location>
        <position position="335"/>
    </location>
</feature>
<feature type="modified residue" description="Phosphoserine" evidence="8">
    <location>
        <position position="339"/>
    </location>
</feature>
<feature type="modified residue" description="Phosphoserine" evidence="2">
    <location>
        <position position="344"/>
    </location>
</feature>
<feature type="modified residue" description="Phosphothreonine" evidence="2">
    <location>
        <position position="370"/>
    </location>
</feature>
<feature type="modified residue" description="N6-acetyllysine" evidence="2">
    <location>
        <position position="385"/>
    </location>
</feature>
<feature type="modified residue" description="Phosphothreonine" evidence="2">
    <location>
        <position position="389"/>
    </location>
</feature>
<feature type="modified residue" description="Phosphoserine" evidence="2">
    <location>
        <position position="500"/>
    </location>
</feature>
<feature type="modified residue" description="Phosphoserine" evidence="2">
    <location>
        <position position="516"/>
    </location>
</feature>
<feature type="modified residue" description="Phosphoserine" evidence="2">
    <location>
        <position position="529"/>
    </location>
</feature>
<feature type="modified residue" description="Phosphoserine" evidence="2">
    <location>
        <position position="607"/>
    </location>
</feature>
<feature type="modified residue" description="Phosphoserine" evidence="2">
    <location>
        <position position="619"/>
    </location>
</feature>
<feature type="modified residue" description="Phosphoserine" evidence="2">
    <location>
        <position position="633"/>
    </location>
</feature>
<feature type="modified residue" description="N6-acetyllysine" evidence="2">
    <location>
        <position position="717"/>
    </location>
</feature>
<feature type="modified residue" description="Phosphoserine" evidence="2">
    <location>
        <position position="886"/>
    </location>
</feature>
<feature type="modified residue" description="N6-acetyllysine" evidence="2">
    <location>
        <position position="947"/>
    </location>
</feature>
<feature type="modified residue" description="Phosphoserine" evidence="2">
    <location>
        <position position="1450"/>
    </location>
</feature>
<feature type="modified residue" description="Phosphoserine" evidence="2">
    <location>
        <position position="1454"/>
    </location>
</feature>
<feature type="modified residue" description="Phosphoserine" evidence="2">
    <location>
        <position position="1456"/>
    </location>
</feature>
<feature type="glycosylation site" description="O-linked (GlcNAc) serine" evidence="1">
    <location>
        <position position="534"/>
    </location>
</feature>
<feature type="glycosylation site" description="O-linked (GlcNAc) serine" evidence="1">
    <location>
        <position position="544"/>
    </location>
</feature>
<feature type="glycosylation site" description="O-linked (GlcNAc) serine" evidence="1">
    <location>
        <position position="902"/>
    </location>
</feature>
<feature type="glycosylation site" description="O-linked (GlcNAc) serine" evidence="1">
    <location>
        <position position="1106"/>
    </location>
</feature>
<feature type="cross-link" description="Glycyl lysine isopeptide (Lys-Gly) (interchain with G-Cter in SUMO2)" evidence="2">
    <location>
        <position position="354"/>
    </location>
</feature>
<feature type="mutagenesis site" description="Reduces affinity for RAN; when associated with A-718." evidence="5">
    <original>F</original>
    <variation>A</variation>
    <location>
        <position position="714"/>
    </location>
</feature>
<feature type="mutagenesis site" description="Reduces affinity for RAN; when associated with A-714." evidence="5">
    <original>F</original>
    <variation>A</variation>
    <location>
        <position position="718"/>
    </location>
</feature>
<feature type="helix" evidence="10">
    <location>
        <begin position="652"/>
        <end position="655"/>
    </location>
</feature>
<feature type="strand" evidence="10">
    <location>
        <begin position="662"/>
        <end position="664"/>
    </location>
</feature>
<feature type="turn" evidence="10">
    <location>
        <begin position="665"/>
        <end position="667"/>
    </location>
</feature>
<feature type="turn" evidence="10">
    <location>
        <begin position="679"/>
        <end position="681"/>
    </location>
</feature>
<feature type="helix" evidence="11">
    <location>
        <begin position="715"/>
        <end position="717"/>
    </location>
</feature>
<feature type="strand" evidence="9">
    <location>
        <begin position="725"/>
        <end position="727"/>
    </location>
</feature>
<feature type="turn" evidence="11">
    <location>
        <begin position="728"/>
        <end position="730"/>
    </location>
</feature>
<feature type="strand" evidence="9">
    <location>
        <begin position="732"/>
        <end position="734"/>
    </location>
</feature>
<feature type="turn" evidence="11">
    <location>
        <begin position="742"/>
        <end position="744"/>
    </location>
</feature>
<feature type="helix" evidence="12">
    <location>
        <begin position="782"/>
        <end position="785"/>
    </location>
</feature>
<feature type="turn" evidence="12">
    <location>
        <begin position="796"/>
        <end position="798"/>
    </location>
</feature>
<feature type="turn" evidence="12">
    <location>
        <begin position="810"/>
        <end position="812"/>
    </location>
</feature>
<feature type="turn" evidence="13">
    <location>
        <begin position="853"/>
        <end position="855"/>
    </location>
</feature>
<feature type="turn" evidence="13">
    <location>
        <begin position="867"/>
        <end position="869"/>
    </location>
</feature>
<organism>
    <name type="scientific">Rattus norvegicus</name>
    <name type="common">Rat</name>
    <dbReference type="NCBI Taxonomy" id="10116"/>
    <lineage>
        <taxon>Eukaryota</taxon>
        <taxon>Metazoa</taxon>
        <taxon>Chordata</taxon>
        <taxon>Craniata</taxon>
        <taxon>Vertebrata</taxon>
        <taxon>Euteleostomi</taxon>
        <taxon>Mammalia</taxon>
        <taxon>Eutheria</taxon>
        <taxon>Euarchontoglires</taxon>
        <taxon>Glires</taxon>
        <taxon>Rodentia</taxon>
        <taxon>Myomorpha</taxon>
        <taxon>Muroidea</taxon>
        <taxon>Muridae</taxon>
        <taxon>Murinae</taxon>
        <taxon>Rattus</taxon>
    </lineage>
</organism>
<evidence type="ECO:0000250" key="1"/>
<evidence type="ECO:0000250" key="2">
    <source>
        <dbReference type="UniProtKB" id="P49790"/>
    </source>
</evidence>
<evidence type="ECO:0000255" key="3">
    <source>
        <dbReference type="PROSITE-ProRule" id="PRU00322"/>
    </source>
</evidence>
<evidence type="ECO:0000256" key="4">
    <source>
        <dbReference type="SAM" id="MobiDB-lite"/>
    </source>
</evidence>
<evidence type="ECO:0000269" key="5">
    <source>
    </source>
</evidence>
<evidence type="ECO:0000269" key="6">
    <source>
    </source>
</evidence>
<evidence type="ECO:0000305" key="7"/>
<evidence type="ECO:0007744" key="8">
    <source>
    </source>
</evidence>
<evidence type="ECO:0007829" key="9">
    <source>
        <dbReference type="PDB" id="2K0C"/>
    </source>
</evidence>
<evidence type="ECO:0007829" key="10">
    <source>
        <dbReference type="PDB" id="7MO1"/>
    </source>
</evidence>
<evidence type="ECO:0007829" key="11">
    <source>
        <dbReference type="PDB" id="7MO2"/>
    </source>
</evidence>
<evidence type="ECO:0007829" key="12">
    <source>
        <dbReference type="PDB" id="7MO3"/>
    </source>
</evidence>
<evidence type="ECO:0007829" key="13">
    <source>
        <dbReference type="PDB" id="7MO5"/>
    </source>
</evidence>
<dbReference type="EMBL" id="L06821">
    <property type="status" value="NOT_ANNOTATED_CDS"/>
    <property type="molecule type" value="mRNA"/>
</dbReference>
<dbReference type="PIR" id="A44345">
    <property type="entry name" value="A44345"/>
</dbReference>
<dbReference type="PDB" id="2K0C">
    <property type="method" value="NMR"/>
    <property type="chains" value="A=703-755"/>
</dbReference>
<dbReference type="PDB" id="3CH5">
    <property type="method" value="X-ray"/>
    <property type="resolution" value="2.10 A"/>
    <property type="chains" value="B=703-754"/>
</dbReference>
<dbReference type="PDB" id="3GJ3">
    <property type="method" value="X-ray"/>
    <property type="resolution" value="1.79 A"/>
    <property type="chains" value="B=723-750"/>
</dbReference>
<dbReference type="PDB" id="3GJ4">
    <property type="method" value="X-ray"/>
    <property type="resolution" value="2.15 A"/>
    <property type="chains" value="B/D=790-817"/>
</dbReference>
<dbReference type="PDB" id="3GJ5">
    <property type="method" value="X-ray"/>
    <property type="resolution" value="1.79 A"/>
    <property type="chains" value="B/D=848-876"/>
</dbReference>
<dbReference type="PDB" id="3GJ6">
    <property type="method" value="X-ray"/>
    <property type="resolution" value="2.70 A"/>
    <property type="chains" value="B=658-686"/>
</dbReference>
<dbReference type="PDB" id="3GJ7">
    <property type="method" value="X-ray"/>
    <property type="resolution" value="1.93 A"/>
    <property type="chains" value="B/D=658-750"/>
</dbReference>
<dbReference type="PDB" id="3GJ8">
    <property type="method" value="X-ray"/>
    <property type="resolution" value="1.82 A"/>
    <property type="chains" value="B/D=790-876"/>
</dbReference>
<dbReference type="PDB" id="7MO1">
    <property type="method" value="X-ray"/>
    <property type="resolution" value="1.60 A"/>
    <property type="chains" value="B=648-687"/>
</dbReference>
<dbReference type="PDB" id="7MO2">
    <property type="method" value="X-ray"/>
    <property type="resolution" value="1.65 A"/>
    <property type="chains" value="B/D=713-749"/>
</dbReference>
<dbReference type="PDB" id="7MO3">
    <property type="method" value="X-ray"/>
    <property type="resolution" value="2.05 A"/>
    <property type="chains" value="B/D=781-817"/>
</dbReference>
<dbReference type="PDB" id="7MO4">
    <property type="method" value="X-ray"/>
    <property type="resolution" value="2.40 A"/>
    <property type="chains" value="B/D=781-817"/>
</dbReference>
<dbReference type="PDB" id="7MO5">
    <property type="method" value="X-ray"/>
    <property type="resolution" value="1.55 A"/>
    <property type="chains" value="B=838-874"/>
</dbReference>
<dbReference type="PDBsum" id="2K0C"/>
<dbReference type="PDBsum" id="3CH5"/>
<dbReference type="PDBsum" id="3GJ3"/>
<dbReference type="PDBsum" id="3GJ4"/>
<dbReference type="PDBsum" id="3GJ5"/>
<dbReference type="PDBsum" id="3GJ6"/>
<dbReference type="PDBsum" id="3GJ7"/>
<dbReference type="PDBsum" id="3GJ8"/>
<dbReference type="PDBsum" id="7MO1"/>
<dbReference type="PDBsum" id="7MO2"/>
<dbReference type="PDBsum" id="7MO3"/>
<dbReference type="PDBsum" id="7MO4"/>
<dbReference type="PDBsum" id="7MO5"/>
<dbReference type="SMR" id="P49791"/>
<dbReference type="CORUM" id="P49791"/>
<dbReference type="DIP" id="DIP-46027N"/>
<dbReference type="FunCoup" id="P49791">
    <property type="interactions" value="3344"/>
</dbReference>
<dbReference type="IntAct" id="P49791">
    <property type="interactions" value="4"/>
</dbReference>
<dbReference type="STRING" id="10116.ENSRNOP00000001979"/>
<dbReference type="GlyCosmos" id="P49791">
    <property type="glycosylation" value="4 sites, No reported glycans"/>
</dbReference>
<dbReference type="GlyGen" id="P49791">
    <property type="glycosylation" value="7 sites, 1 O-linked glycan (1 site)"/>
</dbReference>
<dbReference type="iPTMnet" id="P49791"/>
<dbReference type="PhosphoSitePlus" id="P49791"/>
<dbReference type="PaxDb" id="10116-ENSRNOP00000001979"/>
<dbReference type="AGR" id="RGD:3216"/>
<dbReference type="RGD" id="3216">
    <property type="gene designation" value="Nup153"/>
</dbReference>
<dbReference type="eggNOG" id="KOG4719">
    <property type="taxonomic scope" value="Eukaryota"/>
</dbReference>
<dbReference type="InParanoid" id="P49791"/>
<dbReference type="OrthoDB" id="79830at2759"/>
<dbReference type="PhylomeDB" id="P49791"/>
<dbReference type="Reactome" id="R-RNO-159227">
    <property type="pathway name" value="Transport of the SLBP independent Mature mRNA"/>
</dbReference>
<dbReference type="Reactome" id="R-RNO-159230">
    <property type="pathway name" value="Transport of the SLBP Dependant Mature mRNA"/>
</dbReference>
<dbReference type="Reactome" id="R-RNO-159231">
    <property type="pathway name" value="Transport of Mature mRNA Derived from an Intronless Transcript"/>
</dbReference>
<dbReference type="Reactome" id="R-RNO-159236">
    <property type="pathway name" value="Transport of Mature mRNA derived from an Intron-Containing Transcript"/>
</dbReference>
<dbReference type="Reactome" id="R-RNO-170822">
    <property type="pathway name" value="Regulation of Glucokinase by Glucokinase Regulatory Protein"/>
</dbReference>
<dbReference type="Reactome" id="R-RNO-191859">
    <property type="pathway name" value="snRNP Assembly"/>
</dbReference>
<dbReference type="Reactome" id="R-RNO-3108214">
    <property type="pathway name" value="SUMOylation of DNA damage response and repair proteins"/>
</dbReference>
<dbReference type="Reactome" id="R-RNO-3232142">
    <property type="pathway name" value="SUMOylation of ubiquitinylation proteins"/>
</dbReference>
<dbReference type="Reactome" id="R-RNO-3301854">
    <property type="pathway name" value="Nuclear Pore Complex (NPC) Disassembly"/>
</dbReference>
<dbReference type="Reactome" id="R-RNO-3371453">
    <property type="pathway name" value="Regulation of HSF1-mediated heat shock response"/>
</dbReference>
<dbReference type="Reactome" id="R-RNO-4085377">
    <property type="pathway name" value="SUMOylation of SUMOylation proteins"/>
</dbReference>
<dbReference type="Reactome" id="R-RNO-4551638">
    <property type="pathway name" value="SUMOylation of chromatin organization proteins"/>
</dbReference>
<dbReference type="Reactome" id="R-RNO-4570464">
    <property type="pathway name" value="SUMOylation of RNA binding proteins"/>
</dbReference>
<dbReference type="Reactome" id="R-RNO-4615885">
    <property type="pathway name" value="SUMOylation of DNA replication proteins"/>
</dbReference>
<dbReference type="Reactome" id="R-RNO-5578749">
    <property type="pathway name" value="Transcriptional regulation by small RNAs"/>
</dbReference>
<dbReference type="EvolutionaryTrace" id="P49791"/>
<dbReference type="PRO" id="PR:P49791"/>
<dbReference type="Proteomes" id="UP000002494">
    <property type="component" value="Unplaced"/>
</dbReference>
<dbReference type="GO" id="GO:0005642">
    <property type="term" value="C:annulate lamellae"/>
    <property type="evidence" value="ECO:0000314"/>
    <property type="project" value="RGD"/>
</dbReference>
<dbReference type="GO" id="GO:0016020">
    <property type="term" value="C:membrane"/>
    <property type="evidence" value="ECO:0000266"/>
    <property type="project" value="RGD"/>
</dbReference>
<dbReference type="GO" id="GO:0005635">
    <property type="term" value="C:nuclear envelope"/>
    <property type="evidence" value="ECO:0000266"/>
    <property type="project" value="RGD"/>
</dbReference>
<dbReference type="GO" id="GO:0042405">
    <property type="term" value="C:nuclear inclusion body"/>
    <property type="evidence" value="ECO:0000314"/>
    <property type="project" value="UniProtKB"/>
</dbReference>
<dbReference type="GO" id="GO:0031965">
    <property type="term" value="C:nuclear membrane"/>
    <property type="evidence" value="ECO:0000314"/>
    <property type="project" value="UniProtKB"/>
</dbReference>
<dbReference type="GO" id="GO:0034399">
    <property type="term" value="C:nuclear periphery"/>
    <property type="evidence" value="ECO:0000314"/>
    <property type="project" value="UniProtKB"/>
</dbReference>
<dbReference type="GO" id="GO:0005643">
    <property type="term" value="C:nuclear pore"/>
    <property type="evidence" value="ECO:0000314"/>
    <property type="project" value="RGD"/>
</dbReference>
<dbReference type="GO" id="GO:0044615">
    <property type="term" value="C:nuclear pore nuclear basket"/>
    <property type="evidence" value="ECO:0000314"/>
    <property type="project" value="UniProtKB"/>
</dbReference>
<dbReference type="GO" id="GO:1990875">
    <property type="term" value="C:nucleoplasmic side of nuclear pore"/>
    <property type="evidence" value="ECO:0000314"/>
    <property type="project" value="RGD"/>
</dbReference>
<dbReference type="GO" id="GO:0032991">
    <property type="term" value="C:protein-containing complex"/>
    <property type="evidence" value="ECO:0000314"/>
    <property type="project" value="RGD"/>
</dbReference>
<dbReference type="GO" id="GO:0003682">
    <property type="term" value="F:chromatin binding"/>
    <property type="evidence" value="ECO:0000314"/>
    <property type="project" value="RGD"/>
</dbReference>
<dbReference type="GO" id="GO:0003690">
    <property type="term" value="F:double-stranded DNA binding"/>
    <property type="evidence" value="ECO:0000314"/>
    <property type="project" value="RGD"/>
</dbReference>
<dbReference type="GO" id="GO:0042802">
    <property type="term" value="F:identical protein binding"/>
    <property type="evidence" value="ECO:0000266"/>
    <property type="project" value="RGD"/>
</dbReference>
<dbReference type="GO" id="GO:0140693">
    <property type="term" value="F:molecular condensate scaffold activity"/>
    <property type="evidence" value="ECO:0000266"/>
    <property type="project" value="RGD"/>
</dbReference>
<dbReference type="GO" id="GO:0008139">
    <property type="term" value="F:nuclear localization sequence binding"/>
    <property type="evidence" value="ECO:0000314"/>
    <property type="project" value="RGD"/>
</dbReference>
<dbReference type="GO" id="GO:0043495">
    <property type="term" value="F:protein-membrane adaptor activity"/>
    <property type="evidence" value="ECO:0000250"/>
    <property type="project" value="UniProtKB"/>
</dbReference>
<dbReference type="GO" id="GO:0031267">
    <property type="term" value="F:small GTPase binding"/>
    <property type="evidence" value="ECO:0000353"/>
    <property type="project" value="RGD"/>
</dbReference>
<dbReference type="GO" id="GO:0017056">
    <property type="term" value="F:structural constituent of nuclear pore"/>
    <property type="evidence" value="ECO:0000250"/>
    <property type="project" value="UniProtKB"/>
</dbReference>
<dbReference type="GO" id="GO:0008270">
    <property type="term" value="F:zinc ion binding"/>
    <property type="evidence" value="ECO:0000314"/>
    <property type="project" value="RGD"/>
</dbReference>
<dbReference type="GO" id="GO:1990000">
    <property type="term" value="P:amyloid fibril formation"/>
    <property type="evidence" value="ECO:0000266"/>
    <property type="project" value="RGD"/>
</dbReference>
<dbReference type="GO" id="GO:0051028">
    <property type="term" value="P:mRNA transport"/>
    <property type="evidence" value="ECO:0007669"/>
    <property type="project" value="UniProtKB-KW"/>
</dbReference>
<dbReference type="GO" id="GO:0046832">
    <property type="term" value="P:negative regulation of RNA export from nucleus"/>
    <property type="evidence" value="ECO:0000250"/>
    <property type="project" value="UniProtKB"/>
</dbReference>
<dbReference type="GO" id="GO:0051292">
    <property type="term" value="P:nuclear pore complex assembly"/>
    <property type="evidence" value="ECO:0000250"/>
    <property type="project" value="UniProtKB"/>
</dbReference>
<dbReference type="GO" id="GO:0006606">
    <property type="term" value="P:protein import into nucleus"/>
    <property type="evidence" value="ECO:0000318"/>
    <property type="project" value="GO_Central"/>
</dbReference>
<dbReference type="GO" id="GO:0006405">
    <property type="term" value="P:RNA export from nucleus"/>
    <property type="evidence" value="ECO:0000318"/>
    <property type="project" value="GO_Central"/>
</dbReference>
<dbReference type="FunFam" id="4.10.1060.10:FF:000001">
    <property type="entry name" value="Nuclear pore complex protein Nup153"/>
    <property type="match status" value="3"/>
</dbReference>
<dbReference type="FunFam" id="4.10.1060.10:FF:000015">
    <property type="entry name" value="Nuclear pore complex protein Nup153"/>
    <property type="match status" value="1"/>
</dbReference>
<dbReference type="Gene3D" id="4.10.1060.10">
    <property type="entry name" value="Zinc finger, RanBP2-type"/>
    <property type="match status" value="4"/>
</dbReference>
<dbReference type="InterPro" id="IPR026054">
    <property type="entry name" value="Nucleoporin"/>
</dbReference>
<dbReference type="InterPro" id="IPR013913">
    <property type="entry name" value="Nup153_N"/>
</dbReference>
<dbReference type="InterPro" id="IPR018892">
    <property type="entry name" value="Retro-transposon_transp_CS"/>
</dbReference>
<dbReference type="InterPro" id="IPR001876">
    <property type="entry name" value="Znf_RanBP2"/>
</dbReference>
<dbReference type="InterPro" id="IPR036443">
    <property type="entry name" value="Znf_RanBP2_sf"/>
</dbReference>
<dbReference type="PANTHER" id="PTHR23193">
    <property type="entry name" value="NUCLEAR PORE COMPLEX PROTEIN NUP"/>
    <property type="match status" value="1"/>
</dbReference>
<dbReference type="PANTHER" id="PTHR23193:SF23">
    <property type="entry name" value="NUCLEAR PORE COMPLEX PROTEIN NUP153"/>
    <property type="match status" value="1"/>
</dbReference>
<dbReference type="Pfam" id="PF08604">
    <property type="entry name" value="Nup153"/>
    <property type="match status" value="1"/>
</dbReference>
<dbReference type="Pfam" id="PF10599">
    <property type="entry name" value="Nup_retrotrp_bd"/>
    <property type="match status" value="1"/>
</dbReference>
<dbReference type="Pfam" id="PF00641">
    <property type="entry name" value="Zn_ribbon_RanBP"/>
    <property type="match status" value="4"/>
</dbReference>
<dbReference type="SMART" id="SM00547">
    <property type="entry name" value="ZnF_RBZ"/>
    <property type="match status" value="4"/>
</dbReference>
<dbReference type="SUPFAM" id="SSF90209">
    <property type="entry name" value="Ran binding protein zinc finger-like"/>
    <property type="match status" value="4"/>
</dbReference>
<dbReference type="PROSITE" id="PS01358">
    <property type="entry name" value="ZF_RANBP2_1"/>
    <property type="match status" value="4"/>
</dbReference>
<dbReference type="PROSITE" id="PS50199">
    <property type="entry name" value="ZF_RANBP2_2"/>
    <property type="match status" value="4"/>
</dbReference>
<accession>P49791</accession>
<protein>
    <recommendedName>
        <fullName>Nuclear pore complex protein Nup153</fullName>
    </recommendedName>
    <alternativeName>
        <fullName>153 kDa nucleoporin</fullName>
    </alternativeName>
    <alternativeName>
        <fullName>Nucleoporin Nup153</fullName>
    </alternativeName>
</protein>
<name>NU153_RAT</name>